<dbReference type="EC" id="3.6.1.27" evidence="1"/>
<dbReference type="EMBL" id="CP000103">
    <property type="protein sequence ID" value="ABB75578.1"/>
    <property type="molecule type" value="Genomic_DNA"/>
</dbReference>
<dbReference type="RefSeq" id="WP_011381584.1">
    <property type="nucleotide sequence ID" value="NC_007614.1"/>
</dbReference>
<dbReference type="SMR" id="Q2Y6P3"/>
<dbReference type="STRING" id="323848.Nmul_A2286"/>
<dbReference type="KEGG" id="nmu:Nmul_A2286"/>
<dbReference type="eggNOG" id="COG1968">
    <property type="taxonomic scope" value="Bacteria"/>
</dbReference>
<dbReference type="HOGENOM" id="CLU_060296_2_0_4"/>
<dbReference type="OrthoDB" id="9808289at2"/>
<dbReference type="Proteomes" id="UP000002718">
    <property type="component" value="Chromosome"/>
</dbReference>
<dbReference type="GO" id="GO:0005886">
    <property type="term" value="C:plasma membrane"/>
    <property type="evidence" value="ECO:0007669"/>
    <property type="project" value="UniProtKB-SubCell"/>
</dbReference>
<dbReference type="GO" id="GO:0050380">
    <property type="term" value="F:undecaprenyl-diphosphatase activity"/>
    <property type="evidence" value="ECO:0007669"/>
    <property type="project" value="UniProtKB-UniRule"/>
</dbReference>
<dbReference type="GO" id="GO:0071555">
    <property type="term" value="P:cell wall organization"/>
    <property type="evidence" value="ECO:0007669"/>
    <property type="project" value="UniProtKB-KW"/>
</dbReference>
<dbReference type="GO" id="GO:0009252">
    <property type="term" value="P:peptidoglycan biosynthetic process"/>
    <property type="evidence" value="ECO:0007669"/>
    <property type="project" value="UniProtKB-KW"/>
</dbReference>
<dbReference type="GO" id="GO:0008360">
    <property type="term" value="P:regulation of cell shape"/>
    <property type="evidence" value="ECO:0007669"/>
    <property type="project" value="UniProtKB-KW"/>
</dbReference>
<dbReference type="GO" id="GO:0046677">
    <property type="term" value="P:response to antibiotic"/>
    <property type="evidence" value="ECO:0007669"/>
    <property type="project" value="UniProtKB-UniRule"/>
</dbReference>
<dbReference type="HAMAP" id="MF_01006">
    <property type="entry name" value="Undec_diphosphatase"/>
    <property type="match status" value="1"/>
</dbReference>
<dbReference type="InterPro" id="IPR003824">
    <property type="entry name" value="UppP"/>
</dbReference>
<dbReference type="NCBIfam" id="NF001389">
    <property type="entry name" value="PRK00281.1-2"/>
    <property type="match status" value="1"/>
</dbReference>
<dbReference type="NCBIfam" id="NF001390">
    <property type="entry name" value="PRK00281.1-4"/>
    <property type="match status" value="1"/>
</dbReference>
<dbReference type="NCBIfam" id="TIGR00753">
    <property type="entry name" value="undec_PP_bacA"/>
    <property type="match status" value="1"/>
</dbReference>
<dbReference type="PANTHER" id="PTHR30622">
    <property type="entry name" value="UNDECAPRENYL-DIPHOSPHATASE"/>
    <property type="match status" value="1"/>
</dbReference>
<dbReference type="PANTHER" id="PTHR30622:SF3">
    <property type="entry name" value="UNDECAPRENYL-DIPHOSPHATASE"/>
    <property type="match status" value="1"/>
</dbReference>
<dbReference type="Pfam" id="PF02673">
    <property type="entry name" value="BacA"/>
    <property type="match status" value="1"/>
</dbReference>
<organism>
    <name type="scientific">Nitrosospira multiformis (strain ATCC 25196 / NCIMB 11849 / C 71)</name>
    <dbReference type="NCBI Taxonomy" id="323848"/>
    <lineage>
        <taxon>Bacteria</taxon>
        <taxon>Pseudomonadati</taxon>
        <taxon>Pseudomonadota</taxon>
        <taxon>Betaproteobacteria</taxon>
        <taxon>Nitrosomonadales</taxon>
        <taxon>Nitrosomonadaceae</taxon>
        <taxon>Nitrosospira</taxon>
    </lineage>
</organism>
<keyword id="KW-0046">Antibiotic resistance</keyword>
<keyword id="KW-0997">Cell inner membrane</keyword>
<keyword id="KW-1003">Cell membrane</keyword>
<keyword id="KW-0133">Cell shape</keyword>
<keyword id="KW-0961">Cell wall biogenesis/degradation</keyword>
<keyword id="KW-0378">Hydrolase</keyword>
<keyword id="KW-0472">Membrane</keyword>
<keyword id="KW-0573">Peptidoglycan synthesis</keyword>
<keyword id="KW-1185">Reference proteome</keyword>
<keyword id="KW-0812">Transmembrane</keyword>
<keyword id="KW-1133">Transmembrane helix</keyword>
<comment type="function">
    <text evidence="1">Catalyzes the dephosphorylation of undecaprenyl diphosphate (UPP). Confers resistance to bacitracin.</text>
</comment>
<comment type="catalytic activity">
    <reaction evidence="1">
        <text>di-trans,octa-cis-undecaprenyl diphosphate + H2O = di-trans,octa-cis-undecaprenyl phosphate + phosphate + H(+)</text>
        <dbReference type="Rhea" id="RHEA:28094"/>
        <dbReference type="ChEBI" id="CHEBI:15377"/>
        <dbReference type="ChEBI" id="CHEBI:15378"/>
        <dbReference type="ChEBI" id="CHEBI:43474"/>
        <dbReference type="ChEBI" id="CHEBI:58405"/>
        <dbReference type="ChEBI" id="CHEBI:60392"/>
        <dbReference type="EC" id="3.6.1.27"/>
    </reaction>
</comment>
<comment type="subcellular location">
    <subcellularLocation>
        <location evidence="1">Cell inner membrane</location>
        <topology evidence="1">Multi-pass membrane protein</topology>
    </subcellularLocation>
</comment>
<comment type="miscellaneous">
    <text>Bacitracin is thought to be involved in the inhibition of peptidoglycan synthesis by sequestering undecaprenyl diphosphate, thereby reducing the pool of lipid carrier available.</text>
</comment>
<comment type="similarity">
    <text evidence="1">Belongs to the UppP family.</text>
</comment>
<accession>Q2Y6P3</accession>
<feature type="chain" id="PRO_0000250247" description="Undecaprenyl-diphosphatase">
    <location>
        <begin position="1"/>
        <end position="273"/>
    </location>
</feature>
<feature type="transmembrane region" description="Helical" evidence="1">
    <location>
        <begin position="4"/>
        <end position="24"/>
    </location>
</feature>
<feature type="transmembrane region" description="Helical" evidence="1">
    <location>
        <begin position="43"/>
        <end position="63"/>
    </location>
</feature>
<feature type="transmembrane region" description="Helical" evidence="1">
    <location>
        <begin position="83"/>
        <end position="103"/>
    </location>
</feature>
<feature type="transmembrane region" description="Helical" evidence="1">
    <location>
        <begin position="109"/>
        <end position="129"/>
    </location>
</feature>
<feature type="transmembrane region" description="Helical" evidence="1">
    <location>
        <begin position="184"/>
        <end position="204"/>
    </location>
</feature>
<feature type="transmembrane region" description="Helical" evidence="1">
    <location>
        <begin position="218"/>
        <end position="238"/>
    </location>
</feature>
<feature type="transmembrane region" description="Helical" evidence="1">
    <location>
        <begin position="248"/>
        <end position="268"/>
    </location>
</feature>
<evidence type="ECO:0000255" key="1">
    <source>
        <dbReference type="HAMAP-Rule" id="MF_01006"/>
    </source>
</evidence>
<proteinExistence type="inferred from homology"/>
<reference key="1">
    <citation type="submission" date="2005-08" db="EMBL/GenBank/DDBJ databases">
        <title>Complete sequence of chromosome 1 of Nitrosospira multiformis ATCC 25196.</title>
        <authorList>
            <person name="Copeland A."/>
            <person name="Lucas S."/>
            <person name="Lapidus A."/>
            <person name="Barry K."/>
            <person name="Detter J.C."/>
            <person name="Glavina T."/>
            <person name="Hammon N."/>
            <person name="Israni S."/>
            <person name="Pitluck S."/>
            <person name="Chain P."/>
            <person name="Malfatti S."/>
            <person name="Shin M."/>
            <person name="Vergez L."/>
            <person name="Schmutz J."/>
            <person name="Larimer F."/>
            <person name="Land M."/>
            <person name="Hauser L."/>
            <person name="Kyrpides N."/>
            <person name="Lykidis A."/>
            <person name="Richardson P."/>
        </authorList>
    </citation>
    <scope>NUCLEOTIDE SEQUENCE [LARGE SCALE GENOMIC DNA]</scope>
    <source>
        <strain>ATCC 25196 / NCIMB 11849 / C 71</strain>
    </source>
</reference>
<name>UPPP_NITMU</name>
<gene>
    <name evidence="1" type="primary">uppP</name>
    <name type="ordered locus">Nmul_A2286</name>
</gene>
<protein>
    <recommendedName>
        <fullName evidence="1">Undecaprenyl-diphosphatase</fullName>
        <ecNumber evidence="1">3.6.1.27</ecNumber>
    </recommendedName>
    <alternativeName>
        <fullName evidence="1">Bacitracin resistance protein</fullName>
    </alternativeName>
    <alternativeName>
        <fullName evidence="1">Undecaprenyl pyrophosphate phosphatase</fullName>
    </alternativeName>
</protein>
<sequence length="273" mass="30347">MDWFLLLKGLILGIVEGLTEFLPISSTGHLILVSDLLNFNDEKGKVFTIVIQLGAILAVCWEYRVKLRHVVTDIGSRQDANRFVLNLLIAFLPAAILGLLFIKTIKQYLFHPVPVALAFIVGGLLILWAERRPHVVDVERVEDMDWKHALKVGLAQCLALIPGTSRSGATIIGGLFFGLSRKAATEFSFFLAIPVMFAATFYDLYKNRDILHLDDASVFAIGFVASFISALLAVRGLLRFVSQHDFSVFAWYRIGFGIIVLITAYSGMVQWSG</sequence>